<geneLocation type="chloroplast"/>
<accession>Q06FL4</accession>
<feature type="chain" id="PRO_0000293526" description="Potassium/proton antiporter CemA">
    <location>
        <begin position="1"/>
        <end position="229"/>
    </location>
</feature>
<feature type="transmembrane region" description="Helical" evidence="1">
    <location>
        <begin position="11"/>
        <end position="31"/>
    </location>
</feature>
<feature type="transmembrane region" description="Helical" evidence="1">
    <location>
        <begin position="118"/>
        <end position="138"/>
    </location>
</feature>
<feature type="transmembrane region" description="Helical" evidence="1">
    <location>
        <begin position="158"/>
        <end position="178"/>
    </location>
</feature>
<feature type="transmembrane region" description="Helical" evidence="1">
    <location>
        <begin position="190"/>
        <end position="210"/>
    </location>
</feature>
<organism>
    <name type="scientific">Pelargonium hortorum</name>
    <name type="common">Common geranium</name>
    <name type="synonym">Pelargonium inquinans x Pelargonium zonale</name>
    <dbReference type="NCBI Taxonomy" id="4031"/>
    <lineage>
        <taxon>Eukaryota</taxon>
        <taxon>Viridiplantae</taxon>
        <taxon>Streptophyta</taxon>
        <taxon>Embryophyta</taxon>
        <taxon>Tracheophyta</taxon>
        <taxon>Spermatophyta</taxon>
        <taxon>Magnoliopsida</taxon>
        <taxon>eudicotyledons</taxon>
        <taxon>Gunneridae</taxon>
        <taxon>Pentapetalae</taxon>
        <taxon>rosids</taxon>
        <taxon>malvids</taxon>
        <taxon>Geraniales</taxon>
        <taxon>Geraniaceae</taxon>
        <taxon>Pelargonium</taxon>
    </lineage>
</organism>
<keyword id="KW-0050">Antiport</keyword>
<keyword id="KW-0150">Chloroplast</keyword>
<keyword id="KW-0375">Hydrogen ion transport</keyword>
<keyword id="KW-0406">Ion transport</keyword>
<keyword id="KW-0472">Membrane</keyword>
<keyword id="KW-0934">Plastid</keyword>
<keyword id="KW-1001">Plastid inner membrane</keyword>
<keyword id="KW-0630">Potassium</keyword>
<keyword id="KW-0633">Potassium transport</keyword>
<keyword id="KW-0812">Transmembrane</keyword>
<keyword id="KW-1133">Transmembrane helix</keyword>
<keyword id="KW-0813">Transport</keyword>
<evidence type="ECO:0000255" key="1">
    <source>
        <dbReference type="HAMAP-Rule" id="MF_01308"/>
    </source>
</evidence>
<evidence type="ECO:0000305" key="2"/>
<sequence length="229" mass="26895">MTDAKMKKKRTTPFLYLASIVFLPWWISLFFKKSLESWVTNWLNISQSEPFLNDIQEKSLIEKFIELEELLLLDEMIKECPKLDLQKFRIGIHKETIQLMNMYNDDRIHTILHFSTNIISFVILSVCSILGNEELVILNSWIKEFLYNLSDTLKAFCLLALTDFLFGFHTISAWELLIGSVVHNDQMRSLLVCLFPSVLHTIYYFWTFNYLNCVSPSLVVLYDSLVDVD</sequence>
<protein>
    <recommendedName>
        <fullName evidence="1">Potassium/proton antiporter CemA</fullName>
    </recommendedName>
    <alternativeName>
        <fullName evidence="1">Chloroplast envelope membrane protein A</fullName>
        <shortName evidence="1">CemA</shortName>
    </alternativeName>
</protein>
<dbReference type="EMBL" id="DQ897681">
    <property type="protein sequence ID" value="ABI17280.1"/>
    <property type="molecule type" value="Genomic_DNA"/>
</dbReference>
<dbReference type="EMBL" id="DQ897681">
    <property type="protein sequence ID" value="ABI17358.1"/>
    <property type="molecule type" value="Genomic_DNA"/>
</dbReference>
<dbReference type="RefSeq" id="YP_784089.1">
    <property type="nucleotide sequence ID" value="NC_008454.1"/>
</dbReference>
<dbReference type="RefSeq" id="YP_784167.1">
    <property type="nucleotide sequence ID" value="NC_008454.1"/>
</dbReference>
<dbReference type="SMR" id="Q06FL4"/>
<dbReference type="GeneID" id="4362760"/>
<dbReference type="GeneID" id="4362939"/>
<dbReference type="GO" id="GO:0009706">
    <property type="term" value="C:chloroplast inner membrane"/>
    <property type="evidence" value="ECO:0007669"/>
    <property type="project" value="UniProtKB-SubCell"/>
</dbReference>
<dbReference type="GO" id="GO:0015297">
    <property type="term" value="F:antiporter activity"/>
    <property type="evidence" value="ECO:0007669"/>
    <property type="project" value="UniProtKB-KW"/>
</dbReference>
<dbReference type="GO" id="GO:0015078">
    <property type="term" value="F:proton transmembrane transporter activity"/>
    <property type="evidence" value="ECO:0007669"/>
    <property type="project" value="UniProtKB-UniRule"/>
</dbReference>
<dbReference type="GO" id="GO:0006813">
    <property type="term" value="P:potassium ion transport"/>
    <property type="evidence" value="ECO:0007669"/>
    <property type="project" value="UniProtKB-UniRule"/>
</dbReference>
<dbReference type="HAMAP" id="MF_01308">
    <property type="entry name" value="CemA_PxcA"/>
    <property type="match status" value="1"/>
</dbReference>
<dbReference type="InterPro" id="IPR004282">
    <property type="entry name" value="CemA"/>
</dbReference>
<dbReference type="PANTHER" id="PTHR33650:SF2">
    <property type="entry name" value="CHLOROPLAST ENVELOPE MEMBRANE PROTEIN"/>
    <property type="match status" value="1"/>
</dbReference>
<dbReference type="PANTHER" id="PTHR33650">
    <property type="entry name" value="CHLOROPLAST ENVELOPE MEMBRANE PROTEIN-RELATED"/>
    <property type="match status" value="1"/>
</dbReference>
<dbReference type="Pfam" id="PF03040">
    <property type="entry name" value="CemA"/>
    <property type="match status" value="1"/>
</dbReference>
<proteinExistence type="inferred from homology"/>
<reference key="1">
    <citation type="journal article" date="2006" name="Mol. Biol. Evol.">
        <title>The complete chloroplast genome sequence of Pelargonium x hortorum: organization and evolution of the largest and most highly rearranged chloroplast genome of land plants.</title>
        <authorList>
            <person name="Chumley T.W."/>
            <person name="Palmer J.D."/>
            <person name="Mower J.P."/>
            <person name="Fourcade H.M."/>
            <person name="Calie P.J."/>
            <person name="Boore J.L."/>
            <person name="Jansen R.K."/>
        </authorList>
    </citation>
    <scope>NUCLEOTIDE SEQUENCE [LARGE SCALE GENOMIC DNA]</scope>
    <source>
        <strain>cv. Ringo White</strain>
    </source>
</reference>
<gene>
    <name evidence="1" type="primary">cemA</name>
    <name type="synonym">cemA-A</name>
</gene>
<gene>
    <name evidence="1" type="primary">cemA</name>
    <name type="synonym">cemA-B</name>
</gene>
<comment type="function">
    <text evidence="1">Contributes to K(+)/H(+) antiport activity by supporting proton efflux to control proton extrusion and homeostasis in chloroplasts in a light-dependent manner to modulate photosynthesis. Prevents excessive induction of non-photochemical quenching (NPQ) under continuous-light conditions. Indirectly promotes efficient inorganic carbon uptake into chloroplasts.</text>
</comment>
<comment type="catalytic activity">
    <reaction evidence="1">
        <text>K(+)(in) + H(+)(out) = K(+)(out) + H(+)(in)</text>
        <dbReference type="Rhea" id="RHEA:29467"/>
        <dbReference type="ChEBI" id="CHEBI:15378"/>
        <dbReference type="ChEBI" id="CHEBI:29103"/>
    </reaction>
</comment>
<comment type="subcellular location">
    <subcellularLocation>
        <location evidence="1">Plastid</location>
        <location evidence="1">Chloroplast inner membrane</location>
        <topology evidence="1">Multi-pass membrane protein</topology>
    </subcellularLocation>
</comment>
<comment type="similarity">
    <text evidence="1 2">Belongs to the CemA family.</text>
</comment>
<name>CEMA_PELHO</name>